<organism>
    <name type="scientific">Xylella fastidiosa (strain 9a5c)</name>
    <dbReference type="NCBI Taxonomy" id="160492"/>
    <lineage>
        <taxon>Bacteria</taxon>
        <taxon>Pseudomonadati</taxon>
        <taxon>Pseudomonadota</taxon>
        <taxon>Gammaproteobacteria</taxon>
        <taxon>Lysobacterales</taxon>
        <taxon>Lysobacteraceae</taxon>
        <taxon>Xylella</taxon>
    </lineage>
</organism>
<sequence length="157" mass="17572">MSNASGGGPRPRRRDGVDPALRSRARRRALQAVYAWQISGGVAKQVIAHFAHEQAYEVADLAYFEDLVEGVLTHCAELDEKLTPYLDRTIEEVDAIERAVLRLGAYELLYRQDVPYRVVINEAIMTAKRFGSKYGHTYVNGVLDRAALALRKVEVLG</sequence>
<keyword id="KW-0694">RNA-binding</keyword>
<keyword id="KW-0804">Transcription</keyword>
<keyword id="KW-0889">Transcription antitermination</keyword>
<keyword id="KW-0805">Transcription regulation</keyword>
<protein>
    <recommendedName>
        <fullName evidence="1">Transcription antitermination protein NusB</fullName>
    </recommendedName>
    <alternativeName>
        <fullName evidence="1">Antitermination factor NusB</fullName>
    </alternativeName>
</protein>
<reference key="1">
    <citation type="journal article" date="2000" name="Nature">
        <title>The genome sequence of the plant pathogen Xylella fastidiosa.</title>
        <authorList>
            <person name="Simpson A.J.G."/>
            <person name="Reinach F.C."/>
            <person name="Arruda P."/>
            <person name="Abreu F.A."/>
            <person name="Acencio M."/>
            <person name="Alvarenga R."/>
            <person name="Alves L.M.C."/>
            <person name="Araya J.E."/>
            <person name="Baia G.S."/>
            <person name="Baptista C.S."/>
            <person name="Barros M.H."/>
            <person name="Bonaccorsi E.D."/>
            <person name="Bordin S."/>
            <person name="Bove J.M."/>
            <person name="Briones M.R.S."/>
            <person name="Bueno M.R.P."/>
            <person name="Camargo A.A."/>
            <person name="Camargo L.E.A."/>
            <person name="Carraro D.M."/>
            <person name="Carrer H."/>
            <person name="Colauto N.B."/>
            <person name="Colombo C."/>
            <person name="Costa F.F."/>
            <person name="Costa M.C.R."/>
            <person name="Costa-Neto C.M."/>
            <person name="Coutinho L.L."/>
            <person name="Cristofani M."/>
            <person name="Dias-Neto E."/>
            <person name="Docena C."/>
            <person name="El-Dorry H."/>
            <person name="Facincani A.P."/>
            <person name="Ferreira A.J.S."/>
            <person name="Ferreira V.C.A."/>
            <person name="Ferro J.A."/>
            <person name="Fraga J.S."/>
            <person name="Franca S.C."/>
            <person name="Franco M.C."/>
            <person name="Frohme M."/>
            <person name="Furlan L.R."/>
            <person name="Garnier M."/>
            <person name="Goldman G.H."/>
            <person name="Goldman M.H.S."/>
            <person name="Gomes S.L."/>
            <person name="Gruber A."/>
            <person name="Ho P.L."/>
            <person name="Hoheisel J.D."/>
            <person name="Junqueira M.L."/>
            <person name="Kemper E.L."/>
            <person name="Kitajima J.P."/>
            <person name="Krieger J.E."/>
            <person name="Kuramae E.E."/>
            <person name="Laigret F."/>
            <person name="Lambais M.R."/>
            <person name="Leite L.C.C."/>
            <person name="Lemos E.G.M."/>
            <person name="Lemos M.V.F."/>
            <person name="Lopes S.A."/>
            <person name="Lopes C.R."/>
            <person name="Machado J.A."/>
            <person name="Machado M.A."/>
            <person name="Madeira A.M.B.N."/>
            <person name="Madeira H.M.F."/>
            <person name="Marino C.L."/>
            <person name="Marques M.V."/>
            <person name="Martins E.A.L."/>
            <person name="Martins E.M.F."/>
            <person name="Matsukuma A.Y."/>
            <person name="Menck C.F.M."/>
            <person name="Miracca E.C."/>
            <person name="Miyaki C.Y."/>
            <person name="Monteiro-Vitorello C.B."/>
            <person name="Moon D.H."/>
            <person name="Nagai M.A."/>
            <person name="Nascimento A.L.T.O."/>
            <person name="Netto L.E.S."/>
            <person name="Nhani A. Jr."/>
            <person name="Nobrega F.G."/>
            <person name="Nunes L.R."/>
            <person name="Oliveira M.A."/>
            <person name="de Oliveira M.C."/>
            <person name="de Oliveira R.C."/>
            <person name="Palmieri D.A."/>
            <person name="Paris A."/>
            <person name="Peixoto B.R."/>
            <person name="Pereira G.A.G."/>
            <person name="Pereira H.A. Jr."/>
            <person name="Pesquero J.B."/>
            <person name="Quaggio R.B."/>
            <person name="Roberto P.G."/>
            <person name="Rodrigues V."/>
            <person name="de Rosa A.J.M."/>
            <person name="de Rosa V.E. Jr."/>
            <person name="de Sa R.G."/>
            <person name="Santelli R.V."/>
            <person name="Sawasaki H.E."/>
            <person name="da Silva A.C.R."/>
            <person name="da Silva A.M."/>
            <person name="da Silva F.R."/>
            <person name="Silva W.A. Jr."/>
            <person name="da Silveira J.F."/>
            <person name="Silvestri M.L.Z."/>
            <person name="Siqueira W.J."/>
            <person name="de Souza A.A."/>
            <person name="de Souza A.P."/>
            <person name="Terenzi M.F."/>
            <person name="Truffi D."/>
            <person name="Tsai S.M."/>
            <person name="Tsuhako M.H."/>
            <person name="Vallada H."/>
            <person name="Van Sluys M.A."/>
            <person name="Verjovski-Almeida S."/>
            <person name="Vettore A.L."/>
            <person name="Zago M.A."/>
            <person name="Zatz M."/>
            <person name="Meidanis J."/>
            <person name="Setubal J.C."/>
        </authorList>
    </citation>
    <scope>NUCLEOTIDE SEQUENCE [LARGE SCALE GENOMIC DNA]</scope>
    <source>
        <strain>9a5c</strain>
    </source>
</reference>
<feature type="chain" id="PRO_0000176610" description="Transcription antitermination protein NusB">
    <location>
        <begin position="1"/>
        <end position="157"/>
    </location>
</feature>
<name>NUSB_XYLFA</name>
<comment type="function">
    <text evidence="1">Involved in transcription antitermination. Required for transcription of ribosomal RNA (rRNA) genes. Binds specifically to the boxA antiterminator sequence of the ribosomal RNA (rrn) operons.</text>
</comment>
<comment type="similarity">
    <text evidence="1">Belongs to the NusB family.</text>
</comment>
<dbReference type="EMBL" id="AE003849">
    <property type="protein sequence ID" value="AAF83765.1"/>
    <property type="molecule type" value="Genomic_DNA"/>
</dbReference>
<dbReference type="PIR" id="D82741">
    <property type="entry name" value="D82741"/>
</dbReference>
<dbReference type="RefSeq" id="WP_010893474.1">
    <property type="nucleotide sequence ID" value="NC_002488.3"/>
</dbReference>
<dbReference type="SMR" id="Q9PES3"/>
<dbReference type="STRING" id="160492.XF_0955"/>
<dbReference type="KEGG" id="xfa:XF_0955"/>
<dbReference type="eggNOG" id="COG0781">
    <property type="taxonomic scope" value="Bacteria"/>
</dbReference>
<dbReference type="HOGENOM" id="CLU_087843_4_1_6"/>
<dbReference type="Proteomes" id="UP000000812">
    <property type="component" value="Chromosome"/>
</dbReference>
<dbReference type="GO" id="GO:0005829">
    <property type="term" value="C:cytosol"/>
    <property type="evidence" value="ECO:0007669"/>
    <property type="project" value="TreeGrafter"/>
</dbReference>
<dbReference type="GO" id="GO:0003723">
    <property type="term" value="F:RNA binding"/>
    <property type="evidence" value="ECO:0007669"/>
    <property type="project" value="UniProtKB-UniRule"/>
</dbReference>
<dbReference type="GO" id="GO:0006353">
    <property type="term" value="P:DNA-templated transcription termination"/>
    <property type="evidence" value="ECO:0007669"/>
    <property type="project" value="UniProtKB-UniRule"/>
</dbReference>
<dbReference type="GO" id="GO:0031564">
    <property type="term" value="P:transcription antitermination"/>
    <property type="evidence" value="ECO:0007669"/>
    <property type="project" value="UniProtKB-KW"/>
</dbReference>
<dbReference type="FunFam" id="1.10.940.10:FF:000001">
    <property type="entry name" value="Transcription antitermination factor NusB"/>
    <property type="match status" value="1"/>
</dbReference>
<dbReference type="Gene3D" id="1.10.940.10">
    <property type="entry name" value="NusB-like"/>
    <property type="match status" value="1"/>
</dbReference>
<dbReference type="HAMAP" id="MF_00073">
    <property type="entry name" value="NusB"/>
    <property type="match status" value="1"/>
</dbReference>
<dbReference type="InterPro" id="IPR035926">
    <property type="entry name" value="NusB-like_sf"/>
</dbReference>
<dbReference type="InterPro" id="IPR011605">
    <property type="entry name" value="NusB_fam"/>
</dbReference>
<dbReference type="InterPro" id="IPR006027">
    <property type="entry name" value="NusB_RsmB_TIM44"/>
</dbReference>
<dbReference type="NCBIfam" id="TIGR01951">
    <property type="entry name" value="nusB"/>
    <property type="match status" value="1"/>
</dbReference>
<dbReference type="PANTHER" id="PTHR11078:SF3">
    <property type="entry name" value="ANTITERMINATION NUSB DOMAIN-CONTAINING PROTEIN"/>
    <property type="match status" value="1"/>
</dbReference>
<dbReference type="PANTHER" id="PTHR11078">
    <property type="entry name" value="N UTILIZATION SUBSTANCE PROTEIN B-RELATED"/>
    <property type="match status" value="1"/>
</dbReference>
<dbReference type="Pfam" id="PF01029">
    <property type="entry name" value="NusB"/>
    <property type="match status" value="1"/>
</dbReference>
<dbReference type="SUPFAM" id="SSF48013">
    <property type="entry name" value="NusB-like"/>
    <property type="match status" value="1"/>
</dbReference>
<gene>
    <name evidence="1" type="primary">nusB</name>
    <name type="ordered locus">XF_0955</name>
</gene>
<accession>Q9PES3</accession>
<evidence type="ECO:0000255" key="1">
    <source>
        <dbReference type="HAMAP-Rule" id="MF_00073"/>
    </source>
</evidence>
<proteinExistence type="inferred from homology"/>